<accession>Q1LIV4</accession>
<organism>
    <name type="scientific">Cupriavidus metallidurans (strain ATCC 43123 / DSM 2839 / NBRC 102507 / CH34)</name>
    <name type="common">Ralstonia metallidurans</name>
    <dbReference type="NCBI Taxonomy" id="266264"/>
    <lineage>
        <taxon>Bacteria</taxon>
        <taxon>Pseudomonadati</taxon>
        <taxon>Pseudomonadota</taxon>
        <taxon>Betaproteobacteria</taxon>
        <taxon>Burkholderiales</taxon>
        <taxon>Burkholderiaceae</taxon>
        <taxon>Cupriavidus</taxon>
    </lineage>
</organism>
<evidence type="ECO:0000255" key="1">
    <source>
        <dbReference type="HAMAP-Rule" id="MF_01215"/>
    </source>
</evidence>
<name>PYRF_CUPMC</name>
<reference key="1">
    <citation type="journal article" date="2010" name="PLoS ONE">
        <title>The complete genome sequence of Cupriavidus metallidurans strain CH34, a master survivalist in harsh and anthropogenic environments.</title>
        <authorList>
            <person name="Janssen P.J."/>
            <person name="Van Houdt R."/>
            <person name="Moors H."/>
            <person name="Monsieurs P."/>
            <person name="Morin N."/>
            <person name="Michaux A."/>
            <person name="Benotmane M.A."/>
            <person name="Leys N."/>
            <person name="Vallaeys T."/>
            <person name="Lapidus A."/>
            <person name="Monchy S."/>
            <person name="Medigue C."/>
            <person name="Taghavi S."/>
            <person name="McCorkle S."/>
            <person name="Dunn J."/>
            <person name="van der Lelie D."/>
            <person name="Mergeay M."/>
        </authorList>
    </citation>
    <scope>NUCLEOTIDE SEQUENCE [LARGE SCALE GENOMIC DNA]</scope>
    <source>
        <strain>ATCC 43123 / DSM 2839 / NBRC 102507 / CH34</strain>
    </source>
</reference>
<feature type="chain" id="PRO_1000066485" description="Orotidine 5'-phosphate decarboxylase">
    <location>
        <begin position="1"/>
        <end position="272"/>
    </location>
</feature>
<feature type="active site" description="Proton donor" evidence="1">
    <location>
        <position position="95"/>
    </location>
</feature>
<proteinExistence type="inferred from homology"/>
<sequence length="272" mass="29490">MTFTEQLSAAWQRNDSLLCVGLDPDPAKLPLSMTGTGGAIFSFCREIVDATADLVCAFKPQIAYFHSQRAEDQLEQLVEYIHDAHPGVPVILDAKRGDIGSTAEHYAIEAFERYKADAVTVSPYMGFDSMSPYLAYPGKGVIVLCRTSNPGGSDVQFLQVDGKPLYQVVAEAARERWNTNGQMGLVVGATFPNEIAKVRQIVGDMPLLIPGIGAQGGDIEATVKAGRTADGTGMMINSSRAILYASREKDFALAARNVALQTRETINRYRHG</sequence>
<protein>
    <recommendedName>
        <fullName evidence="1">Orotidine 5'-phosphate decarboxylase</fullName>
        <ecNumber evidence="1">4.1.1.23</ecNumber>
    </recommendedName>
    <alternativeName>
        <fullName evidence="1">OMP decarboxylase</fullName>
        <shortName evidence="1">OMPDCase</shortName>
        <shortName evidence="1">OMPdecase</shortName>
    </alternativeName>
</protein>
<dbReference type="EC" id="4.1.1.23" evidence="1"/>
<dbReference type="EMBL" id="CP000352">
    <property type="protein sequence ID" value="ABF09922.1"/>
    <property type="molecule type" value="Genomic_DNA"/>
</dbReference>
<dbReference type="RefSeq" id="WP_011517553.1">
    <property type="nucleotide sequence ID" value="NC_007973.1"/>
</dbReference>
<dbReference type="SMR" id="Q1LIV4"/>
<dbReference type="STRING" id="266264.Rmet_3050"/>
<dbReference type="KEGG" id="rme:Rmet_3050"/>
<dbReference type="eggNOG" id="COG0284">
    <property type="taxonomic scope" value="Bacteria"/>
</dbReference>
<dbReference type="HOGENOM" id="CLU_060704_1_0_4"/>
<dbReference type="UniPathway" id="UPA00070">
    <property type="reaction ID" value="UER00120"/>
</dbReference>
<dbReference type="Proteomes" id="UP000002429">
    <property type="component" value="Chromosome"/>
</dbReference>
<dbReference type="GO" id="GO:0004590">
    <property type="term" value="F:orotidine-5'-phosphate decarboxylase activity"/>
    <property type="evidence" value="ECO:0007669"/>
    <property type="project" value="UniProtKB-UniRule"/>
</dbReference>
<dbReference type="GO" id="GO:0006207">
    <property type="term" value="P:'de novo' pyrimidine nucleobase biosynthetic process"/>
    <property type="evidence" value="ECO:0007669"/>
    <property type="project" value="InterPro"/>
</dbReference>
<dbReference type="GO" id="GO:0044205">
    <property type="term" value="P:'de novo' UMP biosynthetic process"/>
    <property type="evidence" value="ECO:0007669"/>
    <property type="project" value="UniProtKB-UniRule"/>
</dbReference>
<dbReference type="CDD" id="cd04725">
    <property type="entry name" value="OMP_decarboxylase_like"/>
    <property type="match status" value="1"/>
</dbReference>
<dbReference type="Gene3D" id="3.20.20.70">
    <property type="entry name" value="Aldolase class I"/>
    <property type="match status" value="1"/>
</dbReference>
<dbReference type="HAMAP" id="MF_01215">
    <property type="entry name" value="OMPdecase_type2"/>
    <property type="match status" value="1"/>
</dbReference>
<dbReference type="InterPro" id="IPR013785">
    <property type="entry name" value="Aldolase_TIM"/>
</dbReference>
<dbReference type="InterPro" id="IPR018089">
    <property type="entry name" value="OMPdecase_AS"/>
</dbReference>
<dbReference type="InterPro" id="IPR011995">
    <property type="entry name" value="OMPdecase_type-2"/>
</dbReference>
<dbReference type="InterPro" id="IPR001754">
    <property type="entry name" value="OMPdeCOase_dom"/>
</dbReference>
<dbReference type="InterPro" id="IPR011060">
    <property type="entry name" value="RibuloseP-bd_barrel"/>
</dbReference>
<dbReference type="NCBIfam" id="TIGR02127">
    <property type="entry name" value="pyrF_sub2"/>
    <property type="match status" value="1"/>
</dbReference>
<dbReference type="PANTHER" id="PTHR43375">
    <property type="entry name" value="OROTIDINE 5'-PHOSPHATE DECARBOXYLASE"/>
    <property type="match status" value="1"/>
</dbReference>
<dbReference type="PANTHER" id="PTHR43375:SF1">
    <property type="entry name" value="OROTIDINE 5'-PHOSPHATE DECARBOXYLASE"/>
    <property type="match status" value="1"/>
</dbReference>
<dbReference type="Pfam" id="PF00215">
    <property type="entry name" value="OMPdecase"/>
    <property type="match status" value="1"/>
</dbReference>
<dbReference type="SMART" id="SM00934">
    <property type="entry name" value="OMPdecase"/>
    <property type="match status" value="1"/>
</dbReference>
<dbReference type="SUPFAM" id="SSF51366">
    <property type="entry name" value="Ribulose-phoshate binding barrel"/>
    <property type="match status" value="1"/>
</dbReference>
<dbReference type="PROSITE" id="PS00156">
    <property type="entry name" value="OMPDECASE"/>
    <property type="match status" value="1"/>
</dbReference>
<gene>
    <name evidence="1" type="primary">pyrF</name>
    <name type="ordered locus">Rmet_3050</name>
</gene>
<keyword id="KW-0210">Decarboxylase</keyword>
<keyword id="KW-0456">Lyase</keyword>
<keyword id="KW-0665">Pyrimidine biosynthesis</keyword>
<keyword id="KW-1185">Reference proteome</keyword>
<comment type="catalytic activity">
    <reaction evidence="1">
        <text>orotidine 5'-phosphate + H(+) = UMP + CO2</text>
        <dbReference type="Rhea" id="RHEA:11596"/>
        <dbReference type="ChEBI" id="CHEBI:15378"/>
        <dbReference type="ChEBI" id="CHEBI:16526"/>
        <dbReference type="ChEBI" id="CHEBI:57538"/>
        <dbReference type="ChEBI" id="CHEBI:57865"/>
        <dbReference type="EC" id="4.1.1.23"/>
    </reaction>
</comment>
<comment type="pathway">
    <text evidence="1">Pyrimidine metabolism; UMP biosynthesis via de novo pathway; UMP from orotate: step 2/2.</text>
</comment>
<comment type="similarity">
    <text evidence="1">Belongs to the OMP decarboxylase family. Type 2 subfamily.</text>
</comment>